<protein>
    <recommendedName>
        <fullName>Transmembrane protein adipocyte-associated 1 homolog</fullName>
    </recommendedName>
</protein>
<feature type="chain" id="PRO_0000076104" description="Transmembrane protein adipocyte-associated 1 homolog">
    <location>
        <begin position="1"/>
        <end position="454"/>
    </location>
</feature>
<feature type="transmembrane region" description="Helical" evidence="2">
    <location>
        <begin position="80"/>
        <end position="100"/>
    </location>
</feature>
<feature type="transmembrane region" description="Helical" evidence="2">
    <location>
        <begin position="113"/>
        <end position="133"/>
    </location>
</feature>
<feature type="transmembrane region" description="Helical" evidence="2">
    <location>
        <begin position="151"/>
        <end position="171"/>
    </location>
</feature>
<feature type="transmembrane region" description="Helical" evidence="2">
    <location>
        <begin position="180"/>
        <end position="200"/>
    </location>
</feature>
<feature type="transmembrane region" description="Helical" evidence="2">
    <location>
        <begin position="224"/>
        <end position="244"/>
    </location>
</feature>
<feature type="transmembrane region" description="Helical" evidence="2">
    <location>
        <begin position="262"/>
        <end position="282"/>
    </location>
</feature>
<feature type="transmembrane region" description="Helical" evidence="2">
    <location>
        <begin position="290"/>
        <end position="310"/>
    </location>
</feature>
<feature type="region of interest" description="Disordered" evidence="3">
    <location>
        <begin position="408"/>
        <end position="454"/>
    </location>
</feature>
<feature type="compositionally biased region" description="Basic and acidic residues" evidence="3">
    <location>
        <begin position="410"/>
        <end position="421"/>
    </location>
</feature>
<feature type="compositionally biased region" description="Acidic residues" evidence="3">
    <location>
        <begin position="445"/>
        <end position="454"/>
    </location>
</feature>
<feature type="glycosylation site" description="N-linked (GlcNAc...) asparagine" evidence="2">
    <location>
        <position position="26"/>
    </location>
</feature>
<feature type="glycosylation site" description="N-linked (GlcNAc...) asparagine" evidence="2">
    <location>
        <position position="44"/>
    </location>
</feature>
<feature type="glycosylation site" description="N-linked (GlcNAc...) asparagine" evidence="2">
    <location>
        <position position="258"/>
    </location>
</feature>
<feature type="glycosylation site" description="N-linked (GlcNAc...) asparagine" evidence="2">
    <location>
        <position position="322"/>
    </location>
</feature>
<feature type="glycosylation site" description="N-linked (GlcNAc...) asparagine" evidence="2">
    <location>
        <position position="323"/>
    </location>
</feature>
<reference key="1">
    <citation type="journal article" date="2003" name="PLoS Biol.">
        <title>The genome sequence of Caenorhabditis briggsae: a platform for comparative genomics.</title>
        <authorList>
            <person name="Stein L.D."/>
            <person name="Bao Z."/>
            <person name="Blasiar D."/>
            <person name="Blumenthal T."/>
            <person name="Brent M.R."/>
            <person name="Chen N."/>
            <person name="Chinwalla A."/>
            <person name="Clarke L."/>
            <person name="Clee C."/>
            <person name="Coghlan A."/>
            <person name="Coulson A."/>
            <person name="D'Eustachio P."/>
            <person name="Fitch D.H.A."/>
            <person name="Fulton L.A."/>
            <person name="Fulton R.E."/>
            <person name="Griffiths-Jones S."/>
            <person name="Harris T.W."/>
            <person name="Hillier L.W."/>
            <person name="Kamath R."/>
            <person name="Kuwabara P.E."/>
            <person name="Mardis E.R."/>
            <person name="Marra M.A."/>
            <person name="Miner T.L."/>
            <person name="Minx P."/>
            <person name="Mullikin J.C."/>
            <person name="Plumb R.W."/>
            <person name="Rogers J."/>
            <person name="Schein J.E."/>
            <person name="Sohrmann M."/>
            <person name="Spieth J."/>
            <person name="Stajich J.E."/>
            <person name="Wei C."/>
            <person name="Willey D."/>
            <person name="Wilson R.K."/>
            <person name="Durbin R.M."/>
            <person name="Waterston R.H."/>
        </authorList>
    </citation>
    <scope>NUCLEOTIDE SEQUENCE [LARGE SCALE GENOMIC DNA]</scope>
    <source>
        <strain>AF16</strain>
    </source>
</reference>
<organism>
    <name type="scientific">Caenorhabditis briggsae</name>
    <dbReference type="NCBI Taxonomy" id="6238"/>
    <lineage>
        <taxon>Eukaryota</taxon>
        <taxon>Metazoa</taxon>
        <taxon>Ecdysozoa</taxon>
        <taxon>Nematoda</taxon>
        <taxon>Chromadorea</taxon>
        <taxon>Rhabditida</taxon>
        <taxon>Rhabditina</taxon>
        <taxon>Rhabditomorpha</taxon>
        <taxon>Rhabditoidea</taxon>
        <taxon>Rhabditidae</taxon>
        <taxon>Peloderinae</taxon>
        <taxon>Caenorhabditis</taxon>
    </lineage>
</organism>
<gene>
    <name type="primary">tpra-1</name>
    <name type="ORF">CBG21730</name>
</gene>
<accession>Q60QP4</accession>
<accession>A8Y0M1</accession>
<sequence>MSVIFHENPGTSLGSVVSSDTNPSFNHTLSIETSPEWIDDLFSNVSFIDSTTHQVIRGFCRDVFVYRLPGGFRIRYWDAAILIPNLLFLLFLFLKCTSVIRKLQTGNSPVLRAFTLLVYVSTLVNIIRCVYSMTLSMTDGIEQTVDQTLWIIIKFFYLTAEFCALTFGLLFGHLDNGRSILIALLGTLLVSIPHTAVQVIVEMKIIDNSWLPLTYFDIESDGGFVFWVLSSATLALVYFFIMCLPLVCCQKYTKLPSNGSFFIYCMMMVTLNILQSMGAALILFKSSDGLCFVGVSTYVYFVLYPPIIYFTFLRRKLKTPPNNTSGLFMYRKHKDEQGSGDLPDSYYPRFSGLTSPSYDDLFDYDRDARFTHYDISTNEYVQHPHYNTYSTPLIMSTVETAESTVTTRTGSDDFAHHRDSMLSEPSTGTTTRHLKGLGPQGSLVFEEDPSSLRL</sequence>
<proteinExistence type="inferred from homology"/>
<evidence type="ECO:0000250" key="1"/>
<evidence type="ECO:0000255" key="2"/>
<evidence type="ECO:0000256" key="3">
    <source>
        <dbReference type="SAM" id="MobiDB-lite"/>
    </source>
</evidence>
<evidence type="ECO:0000305" key="4"/>
<name>TPRA1_CAEBR</name>
<dbReference type="EMBL" id="HE600966">
    <property type="protein sequence ID" value="CAP38440.2"/>
    <property type="molecule type" value="Genomic_DNA"/>
</dbReference>
<dbReference type="FunCoup" id="Q60QP4">
    <property type="interactions" value="576"/>
</dbReference>
<dbReference type="STRING" id="6238.Q60QP4"/>
<dbReference type="GlyCosmos" id="Q60QP4">
    <property type="glycosylation" value="5 sites, No reported glycans"/>
</dbReference>
<dbReference type="EnsemblMetazoa" id="CBG21730.1">
    <property type="protein sequence ID" value="CBG21730.1"/>
    <property type="gene ID" value="WBGene00040430"/>
</dbReference>
<dbReference type="WormBase" id="CBG21730">
    <property type="protein sequence ID" value="CBP27932"/>
    <property type="gene ID" value="WBGene00040430"/>
    <property type="gene designation" value="Cbr-tpra-1"/>
</dbReference>
<dbReference type="eggNOG" id="KOG4536">
    <property type="taxonomic scope" value="Eukaryota"/>
</dbReference>
<dbReference type="HOGENOM" id="CLU_702556_0_0_1"/>
<dbReference type="InParanoid" id="Q60QP4"/>
<dbReference type="OMA" id="FRIRYWD"/>
<dbReference type="Proteomes" id="UP000008549">
    <property type="component" value="Unassembled WGS sequence"/>
</dbReference>
<dbReference type="GO" id="GO:0005886">
    <property type="term" value="C:plasma membrane"/>
    <property type="evidence" value="ECO:0000318"/>
    <property type="project" value="GO_Central"/>
</dbReference>
<dbReference type="GO" id="GO:0004930">
    <property type="term" value="F:G protein-coupled receptor activity"/>
    <property type="evidence" value="ECO:0000318"/>
    <property type="project" value="GO_Central"/>
</dbReference>
<dbReference type="GO" id="GO:0007186">
    <property type="term" value="P:G protein-coupled receptor signaling pathway"/>
    <property type="evidence" value="ECO:0000318"/>
    <property type="project" value="GO_Central"/>
</dbReference>
<dbReference type="InterPro" id="IPR018781">
    <property type="entry name" value="TPRA1/CAND2/CAND8"/>
</dbReference>
<dbReference type="PANTHER" id="PTHR15876">
    <property type="entry name" value="TRANSMEMBRANE PROTEIN ADIPOCYTE-ASSOCIATED 1"/>
    <property type="match status" value="1"/>
</dbReference>
<dbReference type="PANTHER" id="PTHR15876:SF8">
    <property type="entry name" value="TRANSMEMBRANE PROTEIN ADIPOCYTE-ASSOCIATED 1"/>
    <property type="match status" value="1"/>
</dbReference>
<dbReference type="Pfam" id="PF10160">
    <property type="entry name" value="Tmemb_40"/>
    <property type="match status" value="1"/>
</dbReference>
<keyword id="KW-0325">Glycoprotein</keyword>
<keyword id="KW-0472">Membrane</keyword>
<keyword id="KW-1185">Reference proteome</keyword>
<keyword id="KW-0812">Transmembrane</keyword>
<keyword id="KW-1133">Transmembrane helix</keyword>
<comment type="subcellular location">
    <subcellularLocation>
        <location evidence="1">Membrane</location>
        <topology evidence="1">Multi-pass membrane protein</topology>
    </subcellularLocation>
</comment>
<comment type="similarity">
    <text evidence="4">Belongs to the UPF0359 family.</text>
</comment>